<gene>
    <name evidence="1" type="primary">carB</name>
    <name type="ordered locus">DR_0668</name>
</gene>
<reference key="1">
    <citation type="journal article" date="1999" name="Science">
        <title>Genome sequence of the radioresistant bacterium Deinococcus radiodurans R1.</title>
        <authorList>
            <person name="White O."/>
            <person name="Eisen J.A."/>
            <person name="Heidelberg J.F."/>
            <person name="Hickey E.K."/>
            <person name="Peterson J.D."/>
            <person name="Dodson R.J."/>
            <person name="Haft D.H."/>
            <person name="Gwinn M.L."/>
            <person name="Nelson W.C."/>
            <person name="Richardson D.L."/>
            <person name="Moffat K.S."/>
            <person name="Qin H."/>
            <person name="Jiang L."/>
            <person name="Pamphile W."/>
            <person name="Crosby M."/>
            <person name="Shen M."/>
            <person name="Vamathevan J.J."/>
            <person name="Lam P."/>
            <person name="McDonald L.A."/>
            <person name="Utterback T.R."/>
            <person name="Zalewski C."/>
            <person name="Makarova K.S."/>
            <person name="Aravind L."/>
            <person name="Daly M.J."/>
            <person name="Minton K.W."/>
            <person name="Fleischmann R.D."/>
            <person name="Ketchum K.A."/>
            <person name="Nelson K.E."/>
            <person name="Salzberg S.L."/>
            <person name="Smith H.O."/>
            <person name="Venter J.C."/>
            <person name="Fraser C.M."/>
        </authorList>
    </citation>
    <scope>NUCLEOTIDE SEQUENCE [LARGE SCALE GENOMIC DNA]</scope>
    <source>
        <strain>ATCC 13939 / DSM 20539 / JCM 16871 / CCUG 27074 / LMG 4051 / NBRC 15346 / NCIMB 9279 / VKM B-1422 / R1</strain>
    </source>
</reference>
<proteinExistence type="inferred from homology"/>
<dbReference type="EC" id="6.3.4.16" evidence="1"/>
<dbReference type="EC" id="6.3.5.5" evidence="1"/>
<dbReference type="EMBL" id="AE000513">
    <property type="protein sequence ID" value="AAF10248.1"/>
    <property type="molecule type" value="Genomic_DNA"/>
</dbReference>
<dbReference type="PIR" id="F75489">
    <property type="entry name" value="F75489"/>
</dbReference>
<dbReference type="RefSeq" id="NP_294391.1">
    <property type="nucleotide sequence ID" value="NC_001263.1"/>
</dbReference>
<dbReference type="RefSeq" id="WP_010887313.1">
    <property type="nucleotide sequence ID" value="NC_001263.1"/>
</dbReference>
<dbReference type="SMR" id="Q9RWK0"/>
<dbReference type="FunCoup" id="Q9RWK0">
    <property type="interactions" value="454"/>
</dbReference>
<dbReference type="STRING" id="243230.DR_0668"/>
<dbReference type="PaxDb" id="243230-DR_0668"/>
<dbReference type="EnsemblBacteria" id="AAF10248">
    <property type="protein sequence ID" value="AAF10248"/>
    <property type="gene ID" value="DR_0668"/>
</dbReference>
<dbReference type="GeneID" id="69516913"/>
<dbReference type="KEGG" id="dra:DR_0668"/>
<dbReference type="PATRIC" id="fig|243230.17.peg.845"/>
<dbReference type="eggNOG" id="COG0458">
    <property type="taxonomic scope" value="Bacteria"/>
</dbReference>
<dbReference type="HOGENOM" id="CLU_000513_1_0_0"/>
<dbReference type="InParanoid" id="Q9RWK0"/>
<dbReference type="OrthoDB" id="9804197at2"/>
<dbReference type="UniPathway" id="UPA00068">
    <property type="reaction ID" value="UER00171"/>
</dbReference>
<dbReference type="UniPathway" id="UPA00070">
    <property type="reaction ID" value="UER00115"/>
</dbReference>
<dbReference type="Proteomes" id="UP000002524">
    <property type="component" value="Chromosome 1"/>
</dbReference>
<dbReference type="GO" id="GO:0005737">
    <property type="term" value="C:cytoplasm"/>
    <property type="evidence" value="ECO:0000318"/>
    <property type="project" value="GO_Central"/>
</dbReference>
<dbReference type="GO" id="GO:0005524">
    <property type="term" value="F:ATP binding"/>
    <property type="evidence" value="ECO:0007669"/>
    <property type="project" value="UniProtKB-UniRule"/>
</dbReference>
<dbReference type="GO" id="GO:0004087">
    <property type="term" value="F:carbamoyl-phosphate synthase (ammonia) activity"/>
    <property type="evidence" value="ECO:0007669"/>
    <property type="project" value="RHEA"/>
</dbReference>
<dbReference type="GO" id="GO:0004088">
    <property type="term" value="F:carbamoyl-phosphate synthase (glutamine-hydrolyzing) activity"/>
    <property type="evidence" value="ECO:0007669"/>
    <property type="project" value="UniProtKB-UniRule"/>
</dbReference>
<dbReference type="GO" id="GO:0046872">
    <property type="term" value="F:metal ion binding"/>
    <property type="evidence" value="ECO:0007669"/>
    <property type="project" value="UniProtKB-KW"/>
</dbReference>
<dbReference type="GO" id="GO:0044205">
    <property type="term" value="P:'de novo' UMP biosynthetic process"/>
    <property type="evidence" value="ECO:0007669"/>
    <property type="project" value="UniProtKB-UniRule"/>
</dbReference>
<dbReference type="GO" id="GO:0006541">
    <property type="term" value="P:glutamine metabolic process"/>
    <property type="evidence" value="ECO:0000318"/>
    <property type="project" value="GO_Central"/>
</dbReference>
<dbReference type="GO" id="GO:0006526">
    <property type="term" value="P:L-arginine biosynthetic process"/>
    <property type="evidence" value="ECO:0007669"/>
    <property type="project" value="UniProtKB-UniRule"/>
</dbReference>
<dbReference type="FunFam" id="1.10.1030.10:FF:000002">
    <property type="entry name" value="Carbamoyl-phosphate synthase large chain"/>
    <property type="match status" value="1"/>
</dbReference>
<dbReference type="FunFam" id="3.30.470.20:FF:000007">
    <property type="entry name" value="Carbamoyl-phosphate synthase large chain"/>
    <property type="match status" value="1"/>
</dbReference>
<dbReference type="FunFam" id="3.30.470.20:FF:000026">
    <property type="entry name" value="Carbamoyl-phosphate synthase large chain"/>
    <property type="match status" value="1"/>
</dbReference>
<dbReference type="FunFam" id="3.40.50.20:FF:000001">
    <property type="entry name" value="Carbamoyl-phosphate synthase large chain"/>
    <property type="match status" value="1"/>
</dbReference>
<dbReference type="FunFam" id="3.40.50.20:FF:000003">
    <property type="entry name" value="Carbamoyl-phosphate synthase large chain"/>
    <property type="match status" value="1"/>
</dbReference>
<dbReference type="Gene3D" id="3.40.50.20">
    <property type="match status" value="2"/>
</dbReference>
<dbReference type="Gene3D" id="3.30.470.20">
    <property type="entry name" value="ATP-grasp fold, B domain"/>
    <property type="match status" value="2"/>
</dbReference>
<dbReference type="Gene3D" id="1.10.1030.10">
    <property type="entry name" value="Carbamoyl-phosphate synthetase, large subunit oligomerisation domain"/>
    <property type="match status" value="1"/>
</dbReference>
<dbReference type="HAMAP" id="MF_01210_B">
    <property type="entry name" value="CPSase_L_chain_B"/>
    <property type="match status" value="1"/>
</dbReference>
<dbReference type="InterPro" id="IPR011761">
    <property type="entry name" value="ATP-grasp"/>
</dbReference>
<dbReference type="InterPro" id="IPR006275">
    <property type="entry name" value="CarbamoylP_synth_lsu"/>
</dbReference>
<dbReference type="InterPro" id="IPR005480">
    <property type="entry name" value="CarbamoylP_synth_lsu_oligo"/>
</dbReference>
<dbReference type="InterPro" id="IPR036897">
    <property type="entry name" value="CarbamoylP_synth_lsu_oligo_sf"/>
</dbReference>
<dbReference type="InterPro" id="IPR005479">
    <property type="entry name" value="CbamoylP_synth_lsu-like_ATP-bd"/>
</dbReference>
<dbReference type="InterPro" id="IPR005483">
    <property type="entry name" value="CbamoylP_synth_lsu_CPSase_dom"/>
</dbReference>
<dbReference type="InterPro" id="IPR011607">
    <property type="entry name" value="MGS-like_dom"/>
</dbReference>
<dbReference type="InterPro" id="IPR016185">
    <property type="entry name" value="PreATP-grasp_dom_sf"/>
</dbReference>
<dbReference type="NCBIfam" id="TIGR01369">
    <property type="entry name" value="CPSaseII_lrg"/>
    <property type="match status" value="1"/>
</dbReference>
<dbReference type="NCBIfam" id="NF003671">
    <property type="entry name" value="PRK05294.1"/>
    <property type="match status" value="1"/>
</dbReference>
<dbReference type="NCBIfam" id="NF009455">
    <property type="entry name" value="PRK12815.1"/>
    <property type="match status" value="1"/>
</dbReference>
<dbReference type="PANTHER" id="PTHR11405:SF53">
    <property type="entry name" value="CARBAMOYL-PHOSPHATE SYNTHASE [AMMONIA], MITOCHONDRIAL"/>
    <property type="match status" value="1"/>
</dbReference>
<dbReference type="PANTHER" id="PTHR11405">
    <property type="entry name" value="CARBAMOYLTRANSFERASE FAMILY MEMBER"/>
    <property type="match status" value="1"/>
</dbReference>
<dbReference type="Pfam" id="PF02786">
    <property type="entry name" value="CPSase_L_D2"/>
    <property type="match status" value="2"/>
</dbReference>
<dbReference type="Pfam" id="PF02787">
    <property type="entry name" value="CPSase_L_D3"/>
    <property type="match status" value="1"/>
</dbReference>
<dbReference type="PRINTS" id="PR00098">
    <property type="entry name" value="CPSASE"/>
</dbReference>
<dbReference type="SMART" id="SM01096">
    <property type="entry name" value="CPSase_L_D3"/>
    <property type="match status" value="1"/>
</dbReference>
<dbReference type="SUPFAM" id="SSF48108">
    <property type="entry name" value="Carbamoyl phosphate synthetase, large subunit connection domain"/>
    <property type="match status" value="1"/>
</dbReference>
<dbReference type="SUPFAM" id="SSF56059">
    <property type="entry name" value="Glutathione synthetase ATP-binding domain-like"/>
    <property type="match status" value="2"/>
</dbReference>
<dbReference type="SUPFAM" id="SSF52440">
    <property type="entry name" value="PreATP-grasp domain"/>
    <property type="match status" value="2"/>
</dbReference>
<dbReference type="PROSITE" id="PS50975">
    <property type="entry name" value="ATP_GRASP"/>
    <property type="match status" value="2"/>
</dbReference>
<dbReference type="PROSITE" id="PS00867">
    <property type="entry name" value="CPSASE_2"/>
    <property type="match status" value="2"/>
</dbReference>
<dbReference type="PROSITE" id="PS51855">
    <property type="entry name" value="MGS"/>
    <property type="match status" value="1"/>
</dbReference>
<evidence type="ECO:0000255" key="1">
    <source>
        <dbReference type="HAMAP-Rule" id="MF_01210"/>
    </source>
</evidence>
<keyword id="KW-0028">Amino-acid biosynthesis</keyword>
<keyword id="KW-0055">Arginine biosynthesis</keyword>
<keyword id="KW-0067">ATP-binding</keyword>
<keyword id="KW-0436">Ligase</keyword>
<keyword id="KW-0460">Magnesium</keyword>
<keyword id="KW-0464">Manganese</keyword>
<keyword id="KW-0479">Metal-binding</keyword>
<keyword id="KW-0547">Nucleotide-binding</keyword>
<keyword id="KW-0665">Pyrimidine biosynthesis</keyword>
<keyword id="KW-1185">Reference proteome</keyword>
<keyword id="KW-0677">Repeat</keyword>
<feature type="chain" id="PRO_0000145003" description="Carbamoyl phosphate synthase large chain">
    <location>
        <begin position="1"/>
        <end position="1024"/>
    </location>
</feature>
<feature type="domain" description="ATP-grasp 1" evidence="1">
    <location>
        <begin position="133"/>
        <end position="328"/>
    </location>
</feature>
<feature type="domain" description="ATP-grasp 2" evidence="1">
    <location>
        <begin position="671"/>
        <end position="863"/>
    </location>
</feature>
<feature type="domain" description="MGS-like" evidence="1">
    <location>
        <begin position="930"/>
        <end position="1024"/>
    </location>
</feature>
<feature type="region of interest" description="Carboxyphosphate synthetic domain" evidence="1">
    <location>
        <begin position="1"/>
        <end position="402"/>
    </location>
</feature>
<feature type="region of interest" description="Oligomerization domain" evidence="1">
    <location>
        <begin position="403"/>
        <end position="546"/>
    </location>
</feature>
<feature type="region of interest" description="Carbamoyl phosphate synthetic domain" evidence="1">
    <location>
        <begin position="547"/>
        <end position="929"/>
    </location>
</feature>
<feature type="region of interest" description="Allosteric domain" evidence="1">
    <location>
        <begin position="930"/>
        <end position="1024"/>
    </location>
</feature>
<feature type="binding site" evidence="1">
    <location>
        <position position="129"/>
    </location>
    <ligand>
        <name>ATP</name>
        <dbReference type="ChEBI" id="CHEBI:30616"/>
        <label>1</label>
    </ligand>
</feature>
<feature type="binding site" evidence="1">
    <location>
        <position position="169"/>
    </location>
    <ligand>
        <name>ATP</name>
        <dbReference type="ChEBI" id="CHEBI:30616"/>
        <label>1</label>
    </ligand>
</feature>
<feature type="binding site" evidence="1">
    <location>
        <position position="175"/>
    </location>
    <ligand>
        <name>ATP</name>
        <dbReference type="ChEBI" id="CHEBI:30616"/>
        <label>1</label>
    </ligand>
</feature>
<feature type="binding site" evidence="1">
    <location>
        <position position="176"/>
    </location>
    <ligand>
        <name>ATP</name>
        <dbReference type="ChEBI" id="CHEBI:30616"/>
        <label>1</label>
    </ligand>
</feature>
<feature type="binding site" evidence="1">
    <location>
        <position position="208"/>
    </location>
    <ligand>
        <name>ATP</name>
        <dbReference type="ChEBI" id="CHEBI:30616"/>
        <label>1</label>
    </ligand>
</feature>
<feature type="binding site" evidence="1">
    <location>
        <position position="210"/>
    </location>
    <ligand>
        <name>ATP</name>
        <dbReference type="ChEBI" id="CHEBI:30616"/>
        <label>1</label>
    </ligand>
</feature>
<feature type="binding site" evidence="1">
    <location>
        <position position="215"/>
    </location>
    <ligand>
        <name>ATP</name>
        <dbReference type="ChEBI" id="CHEBI:30616"/>
        <label>1</label>
    </ligand>
</feature>
<feature type="binding site" evidence="1">
    <location>
        <position position="241"/>
    </location>
    <ligand>
        <name>ATP</name>
        <dbReference type="ChEBI" id="CHEBI:30616"/>
        <label>1</label>
    </ligand>
</feature>
<feature type="binding site" evidence="1">
    <location>
        <position position="242"/>
    </location>
    <ligand>
        <name>ATP</name>
        <dbReference type="ChEBI" id="CHEBI:30616"/>
        <label>1</label>
    </ligand>
</feature>
<feature type="binding site" evidence="1">
    <location>
        <position position="243"/>
    </location>
    <ligand>
        <name>ATP</name>
        <dbReference type="ChEBI" id="CHEBI:30616"/>
        <label>1</label>
    </ligand>
</feature>
<feature type="binding site" evidence="1">
    <location>
        <position position="285"/>
    </location>
    <ligand>
        <name>ATP</name>
        <dbReference type="ChEBI" id="CHEBI:30616"/>
        <label>1</label>
    </ligand>
</feature>
<feature type="binding site" evidence="1">
    <location>
        <position position="285"/>
    </location>
    <ligand>
        <name>Mg(2+)</name>
        <dbReference type="ChEBI" id="CHEBI:18420"/>
        <label>1</label>
    </ligand>
</feature>
<feature type="binding site" evidence="1">
    <location>
        <position position="285"/>
    </location>
    <ligand>
        <name>Mn(2+)</name>
        <dbReference type="ChEBI" id="CHEBI:29035"/>
        <label>1</label>
    </ligand>
</feature>
<feature type="binding site" evidence="1">
    <location>
        <position position="299"/>
    </location>
    <ligand>
        <name>ATP</name>
        <dbReference type="ChEBI" id="CHEBI:30616"/>
        <label>1</label>
    </ligand>
</feature>
<feature type="binding site" evidence="1">
    <location>
        <position position="299"/>
    </location>
    <ligand>
        <name>Mg(2+)</name>
        <dbReference type="ChEBI" id="CHEBI:18420"/>
        <label>1</label>
    </ligand>
</feature>
<feature type="binding site" evidence="1">
    <location>
        <position position="299"/>
    </location>
    <ligand>
        <name>Mg(2+)</name>
        <dbReference type="ChEBI" id="CHEBI:18420"/>
        <label>2</label>
    </ligand>
</feature>
<feature type="binding site" evidence="1">
    <location>
        <position position="299"/>
    </location>
    <ligand>
        <name>Mn(2+)</name>
        <dbReference type="ChEBI" id="CHEBI:29035"/>
        <label>1</label>
    </ligand>
</feature>
<feature type="binding site" evidence="1">
    <location>
        <position position="299"/>
    </location>
    <ligand>
        <name>Mn(2+)</name>
        <dbReference type="ChEBI" id="CHEBI:29035"/>
        <label>2</label>
    </ligand>
</feature>
<feature type="binding site" evidence="1">
    <location>
        <position position="301"/>
    </location>
    <ligand>
        <name>Mg(2+)</name>
        <dbReference type="ChEBI" id="CHEBI:18420"/>
        <label>2</label>
    </ligand>
</feature>
<feature type="binding site" evidence="1">
    <location>
        <position position="301"/>
    </location>
    <ligand>
        <name>Mn(2+)</name>
        <dbReference type="ChEBI" id="CHEBI:29035"/>
        <label>2</label>
    </ligand>
</feature>
<feature type="binding site" evidence="1">
    <location>
        <position position="707"/>
    </location>
    <ligand>
        <name>ATP</name>
        <dbReference type="ChEBI" id="CHEBI:30616"/>
        <label>2</label>
    </ligand>
</feature>
<feature type="binding site" evidence="1">
    <location>
        <position position="747"/>
    </location>
    <ligand>
        <name>ATP</name>
        <dbReference type="ChEBI" id="CHEBI:30616"/>
        <label>2</label>
    </ligand>
</feature>
<feature type="binding site" evidence="1">
    <location>
        <position position="749"/>
    </location>
    <ligand>
        <name>ATP</name>
        <dbReference type="ChEBI" id="CHEBI:30616"/>
        <label>2</label>
    </ligand>
</feature>
<feature type="binding site" evidence="1">
    <location>
        <position position="754"/>
    </location>
    <ligand>
        <name>ATP</name>
        <dbReference type="ChEBI" id="CHEBI:30616"/>
        <label>2</label>
    </ligand>
</feature>
<feature type="binding site" evidence="1">
    <location>
        <position position="779"/>
    </location>
    <ligand>
        <name>ATP</name>
        <dbReference type="ChEBI" id="CHEBI:30616"/>
        <label>2</label>
    </ligand>
</feature>
<feature type="binding site" evidence="1">
    <location>
        <position position="780"/>
    </location>
    <ligand>
        <name>ATP</name>
        <dbReference type="ChEBI" id="CHEBI:30616"/>
        <label>2</label>
    </ligand>
</feature>
<feature type="binding site" evidence="1">
    <location>
        <position position="781"/>
    </location>
    <ligand>
        <name>ATP</name>
        <dbReference type="ChEBI" id="CHEBI:30616"/>
        <label>2</label>
    </ligand>
</feature>
<feature type="binding site" evidence="1">
    <location>
        <position position="782"/>
    </location>
    <ligand>
        <name>ATP</name>
        <dbReference type="ChEBI" id="CHEBI:30616"/>
        <label>2</label>
    </ligand>
</feature>
<feature type="binding site" evidence="1">
    <location>
        <position position="822"/>
    </location>
    <ligand>
        <name>ATP</name>
        <dbReference type="ChEBI" id="CHEBI:30616"/>
        <label>2</label>
    </ligand>
</feature>
<feature type="binding site" evidence="1">
    <location>
        <position position="822"/>
    </location>
    <ligand>
        <name>Mg(2+)</name>
        <dbReference type="ChEBI" id="CHEBI:18420"/>
        <label>3</label>
    </ligand>
</feature>
<feature type="binding site" evidence="1">
    <location>
        <position position="822"/>
    </location>
    <ligand>
        <name>Mn(2+)</name>
        <dbReference type="ChEBI" id="CHEBI:29035"/>
        <label>3</label>
    </ligand>
</feature>
<feature type="binding site" evidence="1">
    <location>
        <position position="834"/>
    </location>
    <ligand>
        <name>ATP</name>
        <dbReference type="ChEBI" id="CHEBI:30616"/>
        <label>2</label>
    </ligand>
</feature>
<feature type="binding site" evidence="1">
    <location>
        <position position="834"/>
    </location>
    <ligand>
        <name>Mg(2+)</name>
        <dbReference type="ChEBI" id="CHEBI:18420"/>
        <label>3</label>
    </ligand>
</feature>
<feature type="binding site" evidence="1">
    <location>
        <position position="834"/>
    </location>
    <ligand>
        <name>Mg(2+)</name>
        <dbReference type="ChEBI" id="CHEBI:18420"/>
        <label>4</label>
    </ligand>
</feature>
<feature type="binding site" evidence="1">
    <location>
        <position position="834"/>
    </location>
    <ligand>
        <name>Mn(2+)</name>
        <dbReference type="ChEBI" id="CHEBI:29035"/>
        <label>3</label>
    </ligand>
</feature>
<feature type="binding site" evidence="1">
    <location>
        <position position="834"/>
    </location>
    <ligand>
        <name>Mn(2+)</name>
        <dbReference type="ChEBI" id="CHEBI:29035"/>
        <label>4</label>
    </ligand>
</feature>
<feature type="binding site" evidence="1">
    <location>
        <position position="836"/>
    </location>
    <ligand>
        <name>Mg(2+)</name>
        <dbReference type="ChEBI" id="CHEBI:18420"/>
        <label>4</label>
    </ligand>
</feature>
<feature type="binding site" evidence="1">
    <location>
        <position position="836"/>
    </location>
    <ligand>
        <name>Mn(2+)</name>
        <dbReference type="ChEBI" id="CHEBI:29035"/>
        <label>4</label>
    </ligand>
</feature>
<comment type="function">
    <text evidence="1">Large subunit of the glutamine-dependent carbamoyl phosphate synthetase (CPSase). CPSase catalyzes the formation of carbamoyl phosphate from the ammonia moiety of glutamine, carbonate, and phosphate donated by ATP, constituting the first step of 2 biosynthetic pathways, one leading to arginine and/or urea and the other to pyrimidine nucleotides. The large subunit (synthetase) binds the substrates ammonia (free or transferred from glutamine from the small subunit), hydrogencarbonate and ATP and carries out an ATP-coupled ligase reaction, activating hydrogencarbonate by forming carboxy phosphate which reacts with ammonia to form carbamoyl phosphate.</text>
</comment>
<comment type="catalytic activity">
    <reaction evidence="1">
        <text>hydrogencarbonate + L-glutamine + 2 ATP + H2O = carbamoyl phosphate + L-glutamate + 2 ADP + phosphate + 2 H(+)</text>
        <dbReference type="Rhea" id="RHEA:18633"/>
        <dbReference type="ChEBI" id="CHEBI:15377"/>
        <dbReference type="ChEBI" id="CHEBI:15378"/>
        <dbReference type="ChEBI" id="CHEBI:17544"/>
        <dbReference type="ChEBI" id="CHEBI:29985"/>
        <dbReference type="ChEBI" id="CHEBI:30616"/>
        <dbReference type="ChEBI" id="CHEBI:43474"/>
        <dbReference type="ChEBI" id="CHEBI:58228"/>
        <dbReference type="ChEBI" id="CHEBI:58359"/>
        <dbReference type="ChEBI" id="CHEBI:456216"/>
        <dbReference type="EC" id="6.3.5.5"/>
    </reaction>
</comment>
<comment type="catalytic activity">
    <molecule>Carbamoyl phosphate synthase large chain</molecule>
    <reaction evidence="1">
        <text>hydrogencarbonate + NH4(+) + 2 ATP = carbamoyl phosphate + 2 ADP + phosphate + 2 H(+)</text>
        <dbReference type="Rhea" id="RHEA:18029"/>
        <dbReference type="ChEBI" id="CHEBI:15378"/>
        <dbReference type="ChEBI" id="CHEBI:17544"/>
        <dbReference type="ChEBI" id="CHEBI:28938"/>
        <dbReference type="ChEBI" id="CHEBI:30616"/>
        <dbReference type="ChEBI" id="CHEBI:43474"/>
        <dbReference type="ChEBI" id="CHEBI:58228"/>
        <dbReference type="ChEBI" id="CHEBI:456216"/>
        <dbReference type="EC" id="6.3.4.16"/>
    </reaction>
</comment>
<comment type="cofactor">
    <cofactor evidence="1">
        <name>Mg(2+)</name>
        <dbReference type="ChEBI" id="CHEBI:18420"/>
    </cofactor>
    <cofactor evidence="1">
        <name>Mn(2+)</name>
        <dbReference type="ChEBI" id="CHEBI:29035"/>
    </cofactor>
    <text evidence="1">Binds 4 Mg(2+) or Mn(2+) ions per subunit.</text>
</comment>
<comment type="pathway">
    <text evidence="1">Amino-acid biosynthesis; L-arginine biosynthesis; carbamoyl phosphate from bicarbonate: step 1/1.</text>
</comment>
<comment type="pathway">
    <text evidence="1">Pyrimidine metabolism; UMP biosynthesis via de novo pathway; (S)-dihydroorotate from bicarbonate: step 1/3.</text>
</comment>
<comment type="subunit">
    <text evidence="1">Composed of two chains; the small (or glutamine) chain promotes the hydrolysis of glutamine to ammonia, which is used by the large (or ammonia) chain to synthesize carbamoyl phosphate. Tetramer of heterodimers (alpha,beta)4.</text>
</comment>
<comment type="domain">
    <text evidence="1">The large subunit is composed of 2 ATP-grasp domains that are involved in binding the 2 ATP molecules needed for carbamoyl phosphate synthesis. The N-terminal ATP-grasp domain (referred to as the carboxyphosphate synthetic component) catalyzes the ATP-dependent phosphorylation of hydrogencarbonate to carboxyphosphate and the subsequent nucleophilic attack by ammonia to form a carbamate intermediate. The C-terminal ATP-grasp domain (referred to as the carbamoyl phosphate synthetic component) then catalyzes the phosphorylation of carbamate with the second ATP to form the end product carbamoyl phosphate. The reactive and unstable enzyme intermediates are sequentially channeled from one active site to the next through the interior of the protein over a distance of at least 96 A.</text>
</comment>
<comment type="similarity">
    <text evidence="1">Belongs to the CarB family.</text>
</comment>
<protein>
    <recommendedName>
        <fullName evidence="1">Carbamoyl phosphate synthase large chain</fullName>
        <ecNumber evidence="1">6.3.4.16</ecNumber>
        <ecNumber evidence="1">6.3.5.5</ecNumber>
    </recommendedName>
    <alternativeName>
        <fullName evidence="1">Carbamoyl phosphate synthetase ammonia chain</fullName>
    </alternativeName>
</protein>
<sequence length="1024" mass="111647">MPKRTDLQTILILGSGPIQIGQAAEFDYSGTQALKALKNEGYRVILVNSNPATIMTDPELADATYLEPLTPEFVEKIIEKEKPDAILPTLGGQTALNLAMELHERGSLEKYGVELIGAGVEAIKKGEDRELFQAAMKKIGVETARGKMVHSMEEAVEYQKEIGLPIVIRPSFTLGGTGGGIAHTYEEFLAITEGGLRDSPVTSVLLEESILGWKEYELEVMRDTADTVIIITSIENFDPMGVHTGDSITVAPAQTLSDVEYQRLRDQSLAIIREIGVATGGSNIQFAVNPDNGRVIVIEMNPRVSRSSALASKATGFPIAKIAALLAVGYHLDELPNDITRVTPASFEPSIDYVVTKIPRFAFEKFPGTPDGLGTQMRSVGEVMAIGRTFKESLQKALRSTEGDIRGVYAEMDEAGLRALLYPNPRRIEAVIELLRRGESVESLFDATKIDRWFLSQLKEIMDAEKEILDLGPIAEWKYELWREVKRLGFSDARIGEIVGLSELEVRDLRKKAKATPVYKTVDTCAAEFEAHTPYHYSTYEWEDEVAPTDKPKVVILGSGPNRIGQGVEFDYATVHAVWALQEAGYETIMVNSNPETVSTDYDTADRLYFEPLTFEDVMNIVEHEKPVGVIVQLGGQTPLKLAKKLADAGAPIIGTSPETIHEAEDRASFNALCERLGLPQPRGKVAQTPAQARELAAELGFPLMARPSYVLGGRAMRTVRSMDELTTYLDEVYAAVEGQPSILLDQFLEGALELDVDTLCDGERAVVAGIMEHVEAAGVHSGDSACILPPVTLDAGVLERVKADTERLALELGVRGLMNVQWAVKDGTAYILEANPRASRTVPFVSKAVNHPLAKSAARIAAGQTLEQIGLLETPTPRMYSVKEVHLPFLKFKDVLPVLGPEMKSTGESMGIDSDPYLAFYRAQLGAKNYLPLEGTALLIGDGLDEVAGTLEGAGLKVIREQDGDELPDLLIDVTGSPLLRTALERGVPIVSTKEGAEWTARAVAEAKKAGMLGVRSLQEWVK</sequence>
<accession>Q9RWK0</accession>
<name>CARB_DEIRA</name>
<organism>
    <name type="scientific">Deinococcus radiodurans (strain ATCC 13939 / DSM 20539 / JCM 16871 / CCUG 27074 / LMG 4051 / NBRC 15346 / NCIMB 9279 / VKM B-1422 / R1)</name>
    <dbReference type="NCBI Taxonomy" id="243230"/>
    <lineage>
        <taxon>Bacteria</taxon>
        <taxon>Thermotogati</taxon>
        <taxon>Deinococcota</taxon>
        <taxon>Deinococci</taxon>
        <taxon>Deinococcales</taxon>
        <taxon>Deinococcaceae</taxon>
        <taxon>Deinococcus</taxon>
    </lineage>
</organism>